<proteinExistence type="inferred from homology"/>
<comment type="catalytic activity">
    <reaction evidence="1">
        <text>urea + 2 H2O + H(+) = hydrogencarbonate + 2 NH4(+)</text>
        <dbReference type="Rhea" id="RHEA:20557"/>
        <dbReference type="ChEBI" id="CHEBI:15377"/>
        <dbReference type="ChEBI" id="CHEBI:15378"/>
        <dbReference type="ChEBI" id="CHEBI:16199"/>
        <dbReference type="ChEBI" id="CHEBI:17544"/>
        <dbReference type="ChEBI" id="CHEBI:28938"/>
        <dbReference type="EC" id="3.5.1.5"/>
    </reaction>
</comment>
<comment type="pathway">
    <text evidence="1">Nitrogen metabolism; urea degradation; CO(2) and NH(3) from urea (urease route): step 1/1.</text>
</comment>
<comment type="subunit">
    <text evidence="1">Heterotrimer of UreA (gamma), UreB (beta) and UreC (alpha) subunits. Three heterotrimers associate to form the active enzyme.</text>
</comment>
<comment type="subcellular location">
    <subcellularLocation>
        <location evidence="1">Cytoplasm</location>
    </subcellularLocation>
</comment>
<comment type="similarity">
    <text evidence="1">Belongs to the urease beta subunit family.</text>
</comment>
<sequence>MIPGELFPAEGELILNQGRAVTRLMVANTGDRPVQVGSHYHFAETNPALEFDRGAARGMRLDIAAGTAVRFEPGQRREVVLIPIGGARRIYGFNQQVMGEL</sequence>
<feature type="chain" id="PRO_0000234272" description="Urease subunit beta">
    <location>
        <begin position="1"/>
        <end position="101"/>
    </location>
</feature>
<organism>
    <name type="scientific">Ruegeria pomeroyi (strain ATCC 700808 / DSM 15171 / DSS-3)</name>
    <name type="common">Silicibacter pomeroyi</name>
    <dbReference type="NCBI Taxonomy" id="246200"/>
    <lineage>
        <taxon>Bacteria</taxon>
        <taxon>Pseudomonadati</taxon>
        <taxon>Pseudomonadota</taxon>
        <taxon>Alphaproteobacteria</taxon>
        <taxon>Rhodobacterales</taxon>
        <taxon>Roseobacteraceae</taxon>
        <taxon>Ruegeria</taxon>
    </lineage>
</organism>
<gene>
    <name evidence="1" type="primary">ureB</name>
    <name type="ordered locus">SPO1713</name>
</gene>
<evidence type="ECO:0000255" key="1">
    <source>
        <dbReference type="HAMAP-Rule" id="MF_01954"/>
    </source>
</evidence>
<dbReference type="EC" id="3.5.1.5" evidence="1"/>
<dbReference type="EMBL" id="CP000031">
    <property type="protein sequence ID" value="AAV97135.1"/>
    <property type="molecule type" value="Genomic_DNA"/>
</dbReference>
<dbReference type="RefSeq" id="WP_011047448.1">
    <property type="nucleotide sequence ID" value="NC_003911.12"/>
</dbReference>
<dbReference type="SMR" id="Q5LSQ3"/>
<dbReference type="STRING" id="246200.SPO1713"/>
<dbReference type="PaxDb" id="246200-SPO1713"/>
<dbReference type="KEGG" id="sil:SPO1713"/>
<dbReference type="eggNOG" id="COG0832">
    <property type="taxonomic scope" value="Bacteria"/>
</dbReference>
<dbReference type="HOGENOM" id="CLU_129707_1_1_5"/>
<dbReference type="OrthoDB" id="9797217at2"/>
<dbReference type="UniPathway" id="UPA00258">
    <property type="reaction ID" value="UER00370"/>
</dbReference>
<dbReference type="Proteomes" id="UP000001023">
    <property type="component" value="Chromosome"/>
</dbReference>
<dbReference type="GO" id="GO:0035550">
    <property type="term" value="C:urease complex"/>
    <property type="evidence" value="ECO:0007669"/>
    <property type="project" value="InterPro"/>
</dbReference>
<dbReference type="GO" id="GO:0009039">
    <property type="term" value="F:urease activity"/>
    <property type="evidence" value="ECO:0007669"/>
    <property type="project" value="UniProtKB-UniRule"/>
</dbReference>
<dbReference type="GO" id="GO:0043419">
    <property type="term" value="P:urea catabolic process"/>
    <property type="evidence" value="ECO:0007669"/>
    <property type="project" value="UniProtKB-UniRule"/>
</dbReference>
<dbReference type="CDD" id="cd00407">
    <property type="entry name" value="Urease_beta"/>
    <property type="match status" value="1"/>
</dbReference>
<dbReference type="FunFam" id="2.10.150.10:FF:000001">
    <property type="entry name" value="Urease subunit beta"/>
    <property type="match status" value="1"/>
</dbReference>
<dbReference type="Gene3D" id="2.10.150.10">
    <property type="entry name" value="Urease, beta subunit"/>
    <property type="match status" value="1"/>
</dbReference>
<dbReference type="HAMAP" id="MF_01954">
    <property type="entry name" value="Urease_beta"/>
    <property type="match status" value="1"/>
</dbReference>
<dbReference type="InterPro" id="IPR002019">
    <property type="entry name" value="Urease_beta-like"/>
</dbReference>
<dbReference type="InterPro" id="IPR036461">
    <property type="entry name" value="Urease_betasu_sf"/>
</dbReference>
<dbReference type="InterPro" id="IPR050069">
    <property type="entry name" value="Urease_subunit"/>
</dbReference>
<dbReference type="NCBIfam" id="NF009682">
    <property type="entry name" value="PRK13203.1"/>
    <property type="match status" value="1"/>
</dbReference>
<dbReference type="NCBIfam" id="TIGR00192">
    <property type="entry name" value="urease_beta"/>
    <property type="match status" value="1"/>
</dbReference>
<dbReference type="PANTHER" id="PTHR33569">
    <property type="entry name" value="UREASE"/>
    <property type="match status" value="1"/>
</dbReference>
<dbReference type="PANTHER" id="PTHR33569:SF1">
    <property type="entry name" value="UREASE"/>
    <property type="match status" value="1"/>
</dbReference>
<dbReference type="Pfam" id="PF00699">
    <property type="entry name" value="Urease_beta"/>
    <property type="match status" value="1"/>
</dbReference>
<dbReference type="SUPFAM" id="SSF51278">
    <property type="entry name" value="Urease, beta-subunit"/>
    <property type="match status" value="1"/>
</dbReference>
<reference key="1">
    <citation type="journal article" date="2004" name="Nature">
        <title>Genome sequence of Silicibacter pomeroyi reveals adaptations to the marine environment.</title>
        <authorList>
            <person name="Moran M.A."/>
            <person name="Buchan A."/>
            <person name="Gonzalez J.M."/>
            <person name="Heidelberg J.F."/>
            <person name="Whitman W.B."/>
            <person name="Kiene R.P."/>
            <person name="Henriksen J.R."/>
            <person name="King G.M."/>
            <person name="Belas R."/>
            <person name="Fuqua C."/>
            <person name="Brinkac L.M."/>
            <person name="Lewis M."/>
            <person name="Johri S."/>
            <person name="Weaver B."/>
            <person name="Pai G."/>
            <person name="Eisen J.A."/>
            <person name="Rahe E."/>
            <person name="Sheldon W.M."/>
            <person name="Ye W."/>
            <person name="Miller T.R."/>
            <person name="Carlton J."/>
            <person name="Rasko D.A."/>
            <person name="Paulsen I.T."/>
            <person name="Ren Q."/>
            <person name="Daugherty S.C."/>
            <person name="DeBoy R.T."/>
            <person name="Dodson R.J."/>
            <person name="Durkin A.S."/>
            <person name="Madupu R."/>
            <person name="Nelson W.C."/>
            <person name="Sullivan S.A."/>
            <person name="Rosovitz M.J."/>
            <person name="Haft D.H."/>
            <person name="Selengut J."/>
            <person name="Ward N."/>
        </authorList>
    </citation>
    <scope>NUCLEOTIDE SEQUENCE [LARGE SCALE GENOMIC DNA]</scope>
    <source>
        <strain>ATCC 700808 / DSM 15171 / DSS-3</strain>
    </source>
</reference>
<reference key="2">
    <citation type="journal article" date="2014" name="Stand. Genomic Sci.">
        <title>An updated genome annotation for the model marine bacterium Ruegeria pomeroyi DSS-3.</title>
        <authorList>
            <person name="Rivers A.R."/>
            <person name="Smith C.B."/>
            <person name="Moran M.A."/>
        </authorList>
    </citation>
    <scope>GENOME REANNOTATION</scope>
    <source>
        <strain>ATCC 700808 / DSM 15171 / DSS-3</strain>
    </source>
</reference>
<name>URE2_RUEPO</name>
<accession>Q5LSQ3</accession>
<protein>
    <recommendedName>
        <fullName evidence="1">Urease subunit beta</fullName>
        <ecNumber evidence="1">3.5.1.5</ecNumber>
    </recommendedName>
    <alternativeName>
        <fullName evidence="1">Urea amidohydrolase subunit beta</fullName>
    </alternativeName>
</protein>
<keyword id="KW-0963">Cytoplasm</keyword>
<keyword id="KW-0378">Hydrolase</keyword>
<keyword id="KW-1185">Reference proteome</keyword>